<feature type="chain" id="PRO_0000267924" description="Large ribosomal subunit protein bL17">
    <location>
        <begin position="1"/>
        <end position="140"/>
    </location>
</feature>
<dbReference type="EMBL" id="AM236080">
    <property type="protein sequence ID" value="CAK07294.1"/>
    <property type="molecule type" value="Genomic_DNA"/>
</dbReference>
<dbReference type="RefSeq" id="WP_003558556.1">
    <property type="nucleotide sequence ID" value="NC_008380.1"/>
</dbReference>
<dbReference type="SMR" id="Q1MIB6"/>
<dbReference type="EnsemblBacteria" id="CAK07294">
    <property type="protein sequence ID" value="CAK07294"/>
    <property type="gene ID" value="RL1799"/>
</dbReference>
<dbReference type="GeneID" id="84669512"/>
<dbReference type="KEGG" id="rle:RL1799"/>
<dbReference type="eggNOG" id="COG0203">
    <property type="taxonomic scope" value="Bacteria"/>
</dbReference>
<dbReference type="HOGENOM" id="CLU_074407_2_0_5"/>
<dbReference type="Proteomes" id="UP000006575">
    <property type="component" value="Chromosome"/>
</dbReference>
<dbReference type="GO" id="GO:0022625">
    <property type="term" value="C:cytosolic large ribosomal subunit"/>
    <property type="evidence" value="ECO:0007669"/>
    <property type="project" value="TreeGrafter"/>
</dbReference>
<dbReference type="GO" id="GO:0003735">
    <property type="term" value="F:structural constituent of ribosome"/>
    <property type="evidence" value="ECO:0007669"/>
    <property type="project" value="InterPro"/>
</dbReference>
<dbReference type="GO" id="GO:0006412">
    <property type="term" value="P:translation"/>
    <property type="evidence" value="ECO:0007669"/>
    <property type="project" value="UniProtKB-UniRule"/>
</dbReference>
<dbReference type="FunFam" id="3.90.1030.10:FF:000001">
    <property type="entry name" value="50S ribosomal protein L17"/>
    <property type="match status" value="1"/>
</dbReference>
<dbReference type="Gene3D" id="3.90.1030.10">
    <property type="entry name" value="Ribosomal protein L17"/>
    <property type="match status" value="1"/>
</dbReference>
<dbReference type="HAMAP" id="MF_01368">
    <property type="entry name" value="Ribosomal_bL17"/>
    <property type="match status" value="1"/>
</dbReference>
<dbReference type="InterPro" id="IPR000456">
    <property type="entry name" value="Ribosomal_bL17"/>
</dbReference>
<dbReference type="InterPro" id="IPR047859">
    <property type="entry name" value="Ribosomal_bL17_CS"/>
</dbReference>
<dbReference type="InterPro" id="IPR036373">
    <property type="entry name" value="Ribosomal_bL17_sf"/>
</dbReference>
<dbReference type="NCBIfam" id="TIGR00059">
    <property type="entry name" value="L17"/>
    <property type="match status" value="1"/>
</dbReference>
<dbReference type="PANTHER" id="PTHR14413:SF16">
    <property type="entry name" value="LARGE RIBOSOMAL SUBUNIT PROTEIN BL17M"/>
    <property type="match status" value="1"/>
</dbReference>
<dbReference type="PANTHER" id="PTHR14413">
    <property type="entry name" value="RIBOSOMAL PROTEIN L17"/>
    <property type="match status" value="1"/>
</dbReference>
<dbReference type="Pfam" id="PF01196">
    <property type="entry name" value="Ribosomal_L17"/>
    <property type="match status" value="1"/>
</dbReference>
<dbReference type="SUPFAM" id="SSF64263">
    <property type="entry name" value="Prokaryotic ribosomal protein L17"/>
    <property type="match status" value="1"/>
</dbReference>
<dbReference type="PROSITE" id="PS01167">
    <property type="entry name" value="RIBOSOMAL_L17"/>
    <property type="match status" value="1"/>
</dbReference>
<reference key="1">
    <citation type="journal article" date="2006" name="Genome Biol.">
        <title>The genome of Rhizobium leguminosarum has recognizable core and accessory components.</title>
        <authorList>
            <person name="Young J.P.W."/>
            <person name="Crossman L.C."/>
            <person name="Johnston A.W.B."/>
            <person name="Thomson N.R."/>
            <person name="Ghazoui Z.F."/>
            <person name="Hull K.H."/>
            <person name="Wexler M."/>
            <person name="Curson A.R.J."/>
            <person name="Todd J.D."/>
            <person name="Poole P.S."/>
            <person name="Mauchline T.H."/>
            <person name="East A.K."/>
            <person name="Quail M.A."/>
            <person name="Churcher C."/>
            <person name="Arrowsmith C."/>
            <person name="Cherevach I."/>
            <person name="Chillingworth T."/>
            <person name="Clarke K."/>
            <person name="Cronin A."/>
            <person name="Davis P."/>
            <person name="Fraser A."/>
            <person name="Hance Z."/>
            <person name="Hauser H."/>
            <person name="Jagels K."/>
            <person name="Moule S."/>
            <person name="Mungall K."/>
            <person name="Norbertczak H."/>
            <person name="Rabbinowitsch E."/>
            <person name="Sanders M."/>
            <person name="Simmonds M."/>
            <person name="Whitehead S."/>
            <person name="Parkhill J."/>
        </authorList>
    </citation>
    <scope>NUCLEOTIDE SEQUENCE [LARGE SCALE GENOMIC DNA]</scope>
    <source>
        <strain>DSM 114642 / LMG 32736 / 3841</strain>
    </source>
</reference>
<name>RL17_RHIJ3</name>
<protein>
    <recommendedName>
        <fullName evidence="1">Large ribosomal subunit protein bL17</fullName>
    </recommendedName>
    <alternativeName>
        <fullName evidence="2">50S ribosomal protein L17</fullName>
    </alternativeName>
</protein>
<sequence>MRHGKAGRKLNRTASHRKAMFANMAASLITHEQIVTTLPKAKEIRPIVEKLVTLGKRGDLHARRQAISQIRDAAVVSKLFDTIATRYATRNGGYLRIMKAGFRQGDNAAMAVIEFVDRDAYAKGAADKARVAAEEQAVAA</sequence>
<comment type="subunit">
    <text evidence="1">Part of the 50S ribosomal subunit. Contacts protein L32.</text>
</comment>
<comment type="similarity">
    <text evidence="1">Belongs to the bacterial ribosomal protein bL17 family.</text>
</comment>
<keyword id="KW-0687">Ribonucleoprotein</keyword>
<keyword id="KW-0689">Ribosomal protein</keyword>
<gene>
    <name evidence="1" type="primary">rplQ</name>
    <name type="ordered locus">RL1799</name>
</gene>
<proteinExistence type="inferred from homology"/>
<evidence type="ECO:0000255" key="1">
    <source>
        <dbReference type="HAMAP-Rule" id="MF_01368"/>
    </source>
</evidence>
<evidence type="ECO:0000305" key="2"/>
<accession>Q1MIB6</accession>
<organism>
    <name type="scientific">Rhizobium johnstonii (strain DSM 114642 / LMG 32736 / 3841)</name>
    <name type="common">Rhizobium leguminosarum bv. viciae</name>
    <dbReference type="NCBI Taxonomy" id="216596"/>
    <lineage>
        <taxon>Bacteria</taxon>
        <taxon>Pseudomonadati</taxon>
        <taxon>Pseudomonadota</taxon>
        <taxon>Alphaproteobacteria</taxon>
        <taxon>Hyphomicrobiales</taxon>
        <taxon>Rhizobiaceae</taxon>
        <taxon>Rhizobium/Agrobacterium group</taxon>
        <taxon>Rhizobium</taxon>
        <taxon>Rhizobium johnstonii</taxon>
    </lineage>
</organism>